<gene>
    <name evidence="1" type="primary">dut</name>
    <name type="ordered locus">XOO0497</name>
</gene>
<keyword id="KW-0378">Hydrolase</keyword>
<keyword id="KW-0460">Magnesium</keyword>
<keyword id="KW-0479">Metal-binding</keyword>
<keyword id="KW-0546">Nucleotide metabolism</keyword>
<keyword id="KW-1185">Reference proteome</keyword>
<sequence>MSTPTQSLQVKLLDPRFGDLWPLPAHATESSAGMDLRAALEAPMTLQPGDAALIPSGIAIHLADPQLCAVILPRSGLGHRHGIVLGNGTGLIDADYQGPLLISTWNRGREAFTIEPGDRIAQLVILPIVRAGLQVVDTFVDSARGAGGFGHTGVR</sequence>
<evidence type="ECO:0000255" key="1">
    <source>
        <dbReference type="HAMAP-Rule" id="MF_00116"/>
    </source>
</evidence>
<feature type="chain" id="PRO_0000231438" description="Deoxyuridine 5'-triphosphate nucleotidohydrolase">
    <location>
        <begin position="1"/>
        <end position="155"/>
    </location>
</feature>
<feature type="binding site" evidence="1">
    <location>
        <begin position="74"/>
        <end position="76"/>
    </location>
    <ligand>
        <name>substrate</name>
    </ligand>
</feature>
<feature type="binding site" evidence="1">
    <location>
        <position position="87"/>
    </location>
    <ligand>
        <name>substrate</name>
    </ligand>
</feature>
<feature type="binding site" evidence="1">
    <location>
        <begin position="91"/>
        <end position="93"/>
    </location>
    <ligand>
        <name>substrate</name>
    </ligand>
</feature>
<name>DUT_XANOR</name>
<reference key="1">
    <citation type="journal article" date="2005" name="Nucleic Acids Res.">
        <title>The genome sequence of Xanthomonas oryzae pathovar oryzae KACC10331, the bacterial blight pathogen of rice.</title>
        <authorList>
            <person name="Lee B.-M."/>
            <person name="Park Y.-J."/>
            <person name="Park D.-S."/>
            <person name="Kang H.-W."/>
            <person name="Kim J.-G."/>
            <person name="Song E.-S."/>
            <person name="Park I.-C."/>
            <person name="Yoon U.-H."/>
            <person name="Hahn J.-H."/>
            <person name="Koo B.-S."/>
            <person name="Lee G.-B."/>
            <person name="Kim H."/>
            <person name="Park H.-S."/>
            <person name="Yoon K.-O."/>
            <person name="Kim J.-H."/>
            <person name="Jung C.-H."/>
            <person name="Koh N.-H."/>
            <person name="Seo J.-S."/>
            <person name="Go S.-J."/>
        </authorList>
    </citation>
    <scope>NUCLEOTIDE SEQUENCE [LARGE SCALE GENOMIC DNA]</scope>
    <source>
        <strain>KACC10331 / KXO85</strain>
    </source>
</reference>
<accession>Q5H5L9</accession>
<comment type="function">
    <text evidence="1">This enzyme is involved in nucleotide metabolism: it produces dUMP, the immediate precursor of thymidine nucleotides and it decreases the intracellular concentration of dUTP so that uracil cannot be incorporated into DNA.</text>
</comment>
<comment type="catalytic activity">
    <reaction evidence="1">
        <text>dUTP + H2O = dUMP + diphosphate + H(+)</text>
        <dbReference type="Rhea" id="RHEA:10248"/>
        <dbReference type="ChEBI" id="CHEBI:15377"/>
        <dbReference type="ChEBI" id="CHEBI:15378"/>
        <dbReference type="ChEBI" id="CHEBI:33019"/>
        <dbReference type="ChEBI" id="CHEBI:61555"/>
        <dbReference type="ChEBI" id="CHEBI:246422"/>
        <dbReference type="EC" id="3.6.1.23"/>
    </reaction>
</comment>
<comment type="cofactor">
    <cofactor evidence="1">
        <name>Mg(2+)</name>
        <dbReference type="ChEBI" id="CHEBI:18420"/>
    </cofactor>
</comment>
<comment type="pathway">
    <text evidence="1">Pyrimidine metabolism; dUMP biosynthesis; dUMP from dCTP (dUTP route): step 2/2.</text>
</comment>
<comment type="similarity">
    <text evidence="1">Belongs to the dUTPase family.</text>
</comment>
<organism>
    <name type="scientific">Xanthomonas oryzae pv. oryzae (strain KACC10331 / KXO85)</name>
    <dbReference type="NCBI Taxonomy" id="291331"/>
    <lineage>
        <taxon>Bacteria</taxon>
        <taxon>Pseudomonadati</taxon>
        <taxon>Pseudomonadota</taxon>
        <taxon>Gammaproteobacteria</taxon>
        <taxon>Lysobacterales</taxon>
        <taxon>Lysobacteraceae</taxon>
        <taxon>Xanthomonas</taxon>
    </lineage>
</organism>
<dbReference type="EC" id="3.6.1.23" evidence="1"/>
<dbReference type="EMBL" id="AE013598">
    <property type="protein sequence ID" value="AAW73751.1"/>
    <property type="molecule type" value="Genomic_DNA"/>
</dbReference>
<dbReference type="SMR" id="Q5H5L9"/>
<dbReference type="STRING" id="291331.XOO0497"/>
<dbReference type="KEGG" id="xoo:XOO0497"/>
<dbReference type="PATRIC" id="fig|291331.8.peg.555"/>
<dbReference type="HOGENOM" id="CLU_068508_1_1_6"/>
<dbReference type="UniPathway" id="UPA00610">
    <property type="reaction ID" value="UER00666"/>
</dbReference>
<dbReference type="Proteomes" id="UP000006735">
    <property type="component" value="Chromosome"/>
</dbReference>
<dbReference type="GO" id="GO:0004170">
    <property type="term" value="F:dUTP diphosphatase activity"/>
    <property type="evidence" value="ECO:0007669"/>
    <property type="project" value="UniProtKB-UniRule"/>
</dbReference>
<dbReference type="GO" id="GO:0000287">
    <property type="term" value="F:magnesium ion binding"/>
    <property type="evidence" value="ECO:0007669"/>
    <property type="project" value="UniProtKB-UniRule"/>
</dbReference>
<dbReference type="GO" id="GO:0006226">
    <property type="term" value="P:dUMP biosynthetic process"/>
    <property type="evidence" value="ECO:0007669"/>
    <property type="project" value="UniProtKB-UniRule"/>
</dbReference>
<dbReference type="GO" id="GO:0046081">
    <property type="term" value="P:dUTP catabolic process"/>
    <property type="evidence" value="ECO:0007669"/>
    <property type="project" value="InterPro"/>
</dbReference>
<dbReference type="CDD" id="cd07557">
    <property type="entry name" value="trimeric_dUTPase"/>
    <property type="match status" value="1"/>
</dbReference>
<dbReference type="FunFam" id="2.70.40.10:FF:000002">
    <property type="entry name" value="dUTP diphosphatase"/>
    <property type="match status" value="1"/>
</dbReference>
<dbReference type="Gene3D" id="2.70.40.10">
    <property type="match status" value="1"/>
</dbReference>
<dbReference type="HAMAP" id="MF_00116">
    <property type="entry name" value="dUTPase_bact"/>
    <property type="match status" value="1"/>
</dbReference>
<dbReference type="InterPro" id="IPR008181">
    <property type="entry name" value="dUTPase"/>
</dbReference>
<dbReference type="InterPro" id="IPR029054">
    <property type="entry name" value="dUTPase-like"/>
</dbReference>
<dbReference type="InterPro" id="IPR036157">
    <property type="entry name" value="dUTPase-like_sf"/>
</dbReference>
<dbReference type="InterPro" id="IPR033704">
    <property type="entry name" value="dUTPase_trimeric"/>
</dbReference>
<dbReference type="NCBIfam" id="TIGR00576">
    <property type="entry name" value="dut"/>
    <property type="match status" value="1"/>
</dbReference>
<dbReference type="NCBIfam" id="NF001862">
    <property type="entry name" value="PRK00601.1"/>
    <property type="match status" value="1"/>
</dbReference>
<dbReference type="PANTHER" id="PTHR11241">
    <property type="entry name" value="DEOXYURIDINE 5'-TRIPHOSPHATE NUCLEOTIDOHYDROLASE"/>
    <property type="match status" value="1"/>
</dbReference>
<dbReference type="PANTHER" id="PTHR11241:SF0">
    <property type="entry name" value="DEOXYURIDINE 5'-TRIPHOSPHATE NUCLEOTIDOHYDROLASE"/>
    <property type="match status" value="1"/>
</dbReference>
<dbReference type="Pfam" id="PF00692">
    <property type="entry name" value="dUTPase"/>
    <property type="match status" value="1"/>
</dbReference>
<dbReference type="SUPFAM" id="SSF51283">
    <property type="entry name" value="dUTPase-like"/>
    <property type="match status" value="1"/>
</dbReference>
<protein>
    <recommendedName>
        <fullName evidence="1">Deoxyuridine 5'-triphosphate nucleotidohydrolase</fullName>
        <shortName evidence="1">dUTPase</shortName>
        <ecNumber evidence="1">3.6.1.23</ecNumber>
    </recommendedName>
    <alternativeName>
        <fullName evidence="1">dUTP pyrophosphatase</fullName>
    </alternativeName>
</protein>
<proteinExistence type="inferred from homology"/>